<gene>
    <name type="primary">Sur-8</name>
    <name type="ORF">GM15368</name>
</gene>
<reference key="1">
    <citation type="journal article" date="2007" name="Nature">
        <title>Evolution of genes and genomes on the Drosophila phylogeny.</title>
        <authorList>
            <consortium name="Drosophila 12 genomes consortium"/>
        </authorList>
    </citation>
    <scope>NUCLEOTIDE SEQUENCE [LARGE SCALE GENOMIC DNA]</scope>
    <source>
        <strain>Rob3c / Tucson 14021-0248.25</strain>
    </source>
</reference>
<comment type="function">
    <text evidence="1">Acts as a Ras effector and participates in MAPK pathway activation. Probably acts as a regulatory subunit of protein phosphatase that specifically dephosphorylates Raf kinase and stimulate Raf activity at specialized signaling complexes upon Ras activation (By similarity).</text>
</comment>
<comment type="similarity">
    <text evidence="3">Belongs to the SHOC2 family.</text>
</comment>
<keyword id="KW-0433">Leucine-rich repeat</keyword>
<keyword id="KW-1185">Reference proteome</keyword>
<keyword id="KW-0677">Repeat</keyword>
<evidence type="ECO:0000250" key="1"/>
<evidence type="ECO:0000256" key="2">
    <source>
        <dbReference type="SAM" id="MobiDB-lite"/>
    </source>
</evidence>
<evidence type="ECO:0000305" key="3"/>
<name>SUR8_DROSE</name>
<dbReference type="EMBL" id="CH480827">
    <property type="protein sequence ID" value="EDW44747.1"/>
    <property type="molecule type" value="Genomic_DNA"/>
</dbReference>
<dbReference type="RefSeq" id="XP_002041099.1">
    <property type="nucleotide sequence ID" value="XM_002041063.1"/>
</dbReference>
<dbReference type="SMR" id="B4IBI9"/>
<dbReference type="STRING" id="7238.B4IBI9"/>
<dbReference type="EnsemblMetazoa" id="FBtr0198353">
    <property type="protein sequence ID" value="FBpp0196845"/>
    <property type="gene ID" value="FBgn0170287"/>
</dbReference>
<dbReference type="HOGENOM" id="CLU_000288_18_23_1"/>
<dbReference type="OMA" id="NQFTSYP"/>
<dbReference type="PhylomeDB" id="B4IBI9"/>
<dbReference type="ChiTaRS" id="Sur-8">
    <property type="organism name" value="fly"/>
</dbReference>
<dbReference type="Proteomes" id="UP000001292">
    <property type="component" value="Unassembled WGS sequence"/>
</dbReference>
<dbReference type="FunFam" id="3.80.10.10:FF:000031">
    <property type="entry name" value="leucine-rich repeat protein SHOC-2"/>
    <property type="match status" value="1"/>
</dbReference>
<dbReference type="FunFam" id="3.80.10.10:FF:000115">
    <property type="entry name" value="leucine-rich repeat protein SHOC-2"/>
    <property type="match status" value="1"/>
</dbReference>
<dbReference type="FunFam" id="3.80.10.10:FF:000281">
    <property type="entry name" value="Leucine-rich repeat protein soc-2"/>
    <property type="match status" value="1"/>
</dbReference>
<dbReference type="FunFam" id="3.80.10.10:FF:000450">
    <property type="entry name" value="Leucine-rich repeat protein soc-2"/>
    <property type="match status" value="1"/>
</dbReference>
<dbReference type="Gene3D" id="3.80.10.10">
    <property type="entry name" value="Ribonuclease Inhibitor"/>
    <property type="match status" value="4"/>
</dbReference>
<dbReference type="InterPro" id="IPR001611">
    <property type="entry name" value="Leu-rich_rpt"/>
</dbReference>
<dbReference type="InterPro" id="IPR003591">
    <property type="entry name" value="Leu-rich_rpt_typical-subtyp"/>
</dbReference>
<dbReference type="InterPro" id="IPR050715">
    <property type="entry name" value="LRR-SigEffector_domain"/>
</dbReference>
<dbReference type="InterPro" id="IPR032675">
    <property type="entry name" value="LRR_dom_sf"/>
</dbReference>
<dbReference type="InterPro" id="IPR055414">
    <property type="entry name" value="LRR_R13L4/SHOC2-like"/>
</dbReference>
<dbReference type="PANTHER" id="PTHR45752:SF187">
    <property type="entry name" value="LEUCINE-RICH REPEAT AND IQ DOMAIN-CONTAINING PROTEIN 4"/>
    <property type="match status" value="1"/>
</dbReference>
<dbReference type="PANTHER" id="PTHR45752">
    <property type="entry name" value="LEUCINE-RICH REPEAT-CONTAINING"/>
    <property type="match status" value="1"/>
</dbReference>
<dbReference type="Pfam" id="PF00560">
    <property type="entry name" value="LRR_1"/>
    <property type="match status" value="1"/>
</dbReference>
<dbReference type="Pfam" id="PF23598">
    <property type="entry name" value="LRR_14"/>
    <property type="match status" value="2"/>
</dbReference>
<dbReference type="Pfam" id="PF13855">
    <property type="entry name" value="LRR_8"/>
    <property type="match status" value="1"/>
</dbReference>
<dbReference type="SMART" id="SM00364">
    <property type="entry name" value="LRR_BAC"/>
    <property type="match status" value="10"/>
</dbReference>
<dbReference type="SMART" id="SM00365">
    <property type="entry name" value="LRR_SD22"/>
    <property type="match status" value="7"/>
</dbReference>
<dbReference type="SMART" id="SM00369">
    <property type="entry name" value="LRR_TYP"/>
    <property type="match status" value="15"/>
</dbReference>
<dbReference type="SUPFAM" id="SSF52058">
    <property type="entry name" value="L domain-like"/>
    <property type="match status" value="2"/>
</dbReference>
<dbReference type="PROSITE" id="PS51450">
    <property type="entry name" value="LRR"/>
    <property type="match status" value="18"/>
</dbReference>
<accession>B4IBI9</accession>
<protein>
    <recommendedName>
        <fullName>Leucine-rich repeat protein soc-2 homolog</fullName>
    </recommendedName>
    <alternativeName>
        <fullName>Protein Sur-8 homolog</fullName>
    </alternativeName>
    <alternativeName>
        <fullName>Protein soc-2 homolog</fullName>
    </alternativeName>
</protein>
<organism>
    <name type="scientific">Drosophila sechellia</name>
    <name type="common">Fruit fly</name>
    <dbReference type="NCBI Taxonomy" id="7238"/>
    <lineage>
        <taxon>Eukaryota</taxon>
        <taxon>Metazoa</taxon>
        <taxon>Ecdysozoa</taxon>
        <taxon>Arthropoda</taxon>
        <taxon>Hexapoda</taxon>
        <taxon>Insecta</taxon>
        <taxon>Pterygota</taxon>
        <taxon>Neoptera</taxon>
        <taxon>Endopterygota</taxon>
        <taxon>Diptera</taxon>
        <taxon>Brachycera</taxon>
        <taxon>Muscomorpha</taxon>
        <taxon>Ephydroidea</taxon>
        <taxon>Drosophilidae</taxon>
        <taxon>Drosophila</taxon>
        <taxon>Sophophora</taxon>
    </lineage>
</organism>
<sequence length="683" mass="73395">MNLCSSGATASTTSLSSTGQAERSGGVPGGGAEGGGGGGGSGNSGGGGKTSDVSAEASTLCFAGGSGTAGAITGTDELSNANSPANGAGGASGSTGSAQQPTGSNGHSHLHNENNANMPPETRPKMVTVKHPESNKPKPTTKKSKPIQADQDVIKALQRCRDEGIKRLDLSKSSITVIPSTVKECVHLTELYLYSNKIGQLPPEIGCLVSLRNLALNENSLTSLPESLQNCSQLKVLDLRHNKLAEIPSVIYRLRSLTTLYLRFNRITAVADDLRQLVNLTMLSLRENKIRELGSAIGALVNLTTLDVSHNHLEHLPEDIGNCVNLSALDLQHNELLDIPDSIGNLKSLVRLGMRYNRLSSVPATLKNCKSMDEFNVEGNGITQLPDGMLASLSGLTTITLSRNQFASYPTGGPAQFTNVYSINLEHNRIDKIPYGIFSRAKGLTKLNMKENMLTALPLDIGTWVNMVELNLATNALQKLPDDIMNLQNLEILILSNNMLKKIPNTIGNLRRLRILDLEENRIEVLPHEIGLLHELQRLILQTNQITMLPRSIGHLGNLTHLSVSENNLQFLPEEIGSLESLENLYINQNPGLEKLPFELALCQNLKYLNIDKCPLSTIPPEIQAGGPSLVLQWLKMHSPYRQIDCYYQYELQTVNQAPGAGGNGGGGAAAAGGSASRSSDRR</sequence>
<feature type="chain" id="PRO_0000385639" description="Leucine-rich repeat protein soc-2 homolog">
    <location>
        <begin position="1"/>
        <end position="683"/>
    </location>
</feature>
<feature type="repeat" description="LRR 1">
    <location>
        <begin position="164"/>
        <end position="185"/>
    </location>
</feature>
<feature type="repeat" description="LRR 2">
    <location>
        <begin position="187"/>
        <end position="208"/>
    </location>
</feature>
<feature type="repeat" description="LRR 3">
    <location>
        <begin position="210"/>
        <end position="231"/>
    </location>
</feature>
<feature type="repeat" description="LRR 4">
    <location>
        <begin position="233"/>
        <end position="254"/>
    </location>
</feature>
<feature type="repeat" description="LRR 5">
    <location>
        <begin position="256"/>
        <end position="277"/>
    </location>
</feature>
<feature type="repeat" description="LRR 6">
    <location>
        <begin position="279"/>
        <end position="300"/>
    </location>
</feature>
<feature type="repeat" description="LRR 7">
    <location>
        <begin position="302"/>
        <end position="323"/>
    </location>
</feature>
<feature type="repeat" description="LRR 8">
    <location>
        <begin position="325"/>
        <end position="346"/>
    </location>
</feature>
<feature type="repeat" description="LRR 9">
    <location>
        <begin position="348"/>
        <end position="370"/>
    </location>
</feature>
<feature type="repeat" description="LRR 10">
    <location>
        <begin position="371"/>
        <end position="392"/>
    </location>
</feature>
<feature type="repeat" description="LRR 11">
    <location>
        <begin position="395"/>
        <end position="416"/>
    </location>
</feature>
<feature type="repeat" description="LRR 12">
    <location>
        <begin position="419"/>
        <end position="440"/>
    </location>
</feature>
<feature type="repeat" description="LRR 13">
    <location>
        <begin position="443"/>
        <end position="464"/>
    </location>
</feature>
<feature type="repeat" description="LRR 14">
    <location>
        <begin position="466"/>
        <end position="487"/>
    </location>
</feature>
<feature type="repeat" description="LRR 15">
    <location>
        <begin position="489"/>
        <end position="510"/>
    </location>
</feature>
<feature type="repeat" description="LRR 16">
    <location>
        <begin position="512"/>
        <end position="533"/>
    </location>
</feature>
<feature type="repeat" description="LRR 17">
    <location>
        <begin position="535"/>
        <end position="556"/>
    </location>
</feature>
<feature type="repeat" description="LRR 18">
    <location>
        <begin position="558"/>
        <end position="579"/>
    </location>
</feature>
<feature type="repeat" description="LRR 19">
    <location>
        <begin position="581"/>
        <end position="603"/>
    </location>
</feature>
<feature type="repeat" description="LRR 20">
    <location>
        <begin position="605"/>
        <end position="626"/>
    </location>
</feature>
<feature type="region of interest" description="Disordered" evidence="2">
    <location>
        <begin position="1"/>
        <end position="54"/>
    </location>
</feature>
<feature type="region of interest" description="Disordered" evidence="2">
    <location>
        <begin position="74"/>
        <end position="150"/>
    </location>
</feature>
<feature type="region of interest" description="Disordered" evidence="2">
    <location>
        <begin position="661"/>
        <end position="683"/>
    </location>
</feature>
<feature type="compositionally biased region" description="Low complexity" evidence="2">
    <location>
        <begin position="1"/>
        <end position="19"/>
    </location>
</feature>
<feature type="compositionally biased region" description="Gly residues" evidence="2">
    <location>
        <begin position="26"/>
        <end position="49"/>
    </location>
</feature>
<feature type="compositionally biased region" description="Low complexity" evidence="2">
    <location>
        <begin position="74"/>
        <end position="86"/>
    </location>
</feature>
<feature type="compositionally biased region" description="Polar residues" evidence="2">
    <location>
        <begin position="99"/>
        <end position="117"/>
    </location>
</feature>
<feature type="compositionally biased region" description="Gly residues" evidence="2">
    <location>
        <begin position="661"/>
        <end position="671"/>
    </location>
</feature>
<feature type="compositionally biased region" description="Low complexity" evidence="2">
    <location>
        <begin position="672"/>
        <end position="683"/>
    </location>
</feature>
<proteinExistence type="inferred from homology"/>